<feature type="chain" id="PRO_0000164662" description="Epithelial membrane protein 3">
    <location>
        <begin position="1"/>
        <end position="163"/>
    </location>
</feature>
<feature type="transmembrane region" description="Helical" evidence="1">
    <location>
        <begin position="4"/>
        <end position="24"/>
    </location>
</feature>
<feature type="transmembrane region" description="Helical" evidence="1">
    <location>
        <begin position="66"/>
        <end position="86"/>
    </location>
</feature>
<feature type="transmembrane region" description="Helical" evidence="1">
    <location>
        <begin position="100"/>
        <end position="120"/>
    </location>
</feature>
<feature type="transmembrane region" description="Helical" evidence="1">
    <location>
        <begin position="139"/>
        <end position="159"/>
    </location>
</feature>
<feature type="glycosylation site" description="N-linked (GlcNAc...) asparagine" evidence="1">
    <location>
        <position position="46"/>
    </location>
</feature>
<feature type="glycosylation site" description="N-linked (GlcNAc...) asparagine" evidence="1">
    <location>
        <position position="56"/>
    </location>
</feature>
<organism>
    <name type="scientific">Rattus norvegicus</name>
    <name type="common">Rat</name>
    <dbReference type="NCBI Taxonomy" id="10116"/>
    <lineage>
        <taxon>Eukaryota</taxon>
        <taxon>Metazoa</taxon>
        <taxon>Chordata</taxon>
        <taxon>Craniata</taxon>
        <taxon>Vertebrata</taxon>
        <taxon>Euteleostomi</taxon>
        <taxon>Mammalia</taxon>
        <taxon>Eutheria</taxon>
        <taxon>Euarchontoglires</taxon>
        <taxon>Glires</taxon>
        <taxon>Rodentia</taxon>
        <taxon>Myomorpha</taxon>
        <taxon>Muroidea</taxon>
        <taxon>Muridae</taxon>
        <taxon>Murinae</taxon>
        <taxon>Rattus</taxon>
    </lineage>
</organism>
<comment type="function">
    <text>Probably involved in cell proliferation and cell-cell interactions.</text>
</comment>
<comment type="subcellular location">
    <subcellularLocation>
        <location>Membrane</location>
        <topology>Multi-pass membrane protein</topology>
    </subcellularLocation>
</comment>
<comment type="similarity">
    <text evidence="2">Belongs to the PMP-22/EMP/MP20 family.</text>
</comment>
<dbReference type="EMBL" id="Y10889">
    <property type="protein sequence ID" value="CAB61834.1"/>
    <property type="molecule type" value="mRNA"/>
</dbReference>
<dbReference type="EMBL" id="BC088131">
    <property type="protein sequence ID" value="AAH88131.1"/>
    <property type="molecule type" value="mRNA"/>
</dbReference>
<dbReference type="RefSeq" id="NP_110474.1">
    <property type="nucleotide sequence ID" value="NM_030847.2"/>
</dbReference>
<dbReference type="RefSeq" id="XP_006229220.1">
    <property type="nucleotide sequence ID" value="XM_006229158.5"/>
</dbReference>
<dbReference type="RefSeq" id="XP_008757640.1">
    <property type="nucleotide sequence ID" value="XM_008759418.3"/>
</dbReference>
<dbReference type="RefSeq" id="XP_038947840.1">
    <property type="nucleotide sequence ID" value="XM_039091912.2"/>
</dbReference>
<dbReference type="SMR" id="Q9QYW5"/>
<dbReference type="FunCoup" id="Q9QYW5">
    <property type="interactions" value="498"/>
</dbReference>
<dbReference type="STRING" id="10116.ENSRNOP00000028656"/>
<dbReference type="GlyCosmos" id="Q9QYW5">
    <property type="glycosylation" value="2 sites, No reported glycans"/>
</dbReference>
<dbReference type="GlyGen" id="Q9QYW5">
    <property type="glycosylation" value="2 sites"/>
</dbReference>
<dbReference type="PhosphoSitePlus" id="Q9QYW5"/>
<dbReference type="PaxDb" id="10116-ENSRNOP00000028656"/>
<dbReference type="Ensembl" id="ENSRNOT00000028656.5">
    <property type="protein sequence ID" value="ENSRNOP00000028656.2"/>
    <property type="gene ID" value="ENSRNOG00000021104.5"/>
</dbReference>
<dbReference type="GeneID" id="81505"/>
<dbReference type="KEGG" id="rno:81505"/>
<dbReference type="UCSC" id="RGD:621094">
    <property type="organism name" value="rat"/>
</dbReference>
<dbReference type="AGR" id="RGD:621094"/>
<dbReference type="CTD" id="2014"/>
<dbReference type="RGD" id="621094">
    <property type="gene designation" value="Emp3"/>
</dbReference>
<dbReference type="eggNOG" id="ENOG502RZP6">
    <property type="taxonomic scope" value="Eukaryota"/>
</dbReference>
<dbReference type="GeneTree" id="ENSGT00950000182696"/>
<dbReference type="HOGENOM" id="CLU_138632_1_0_1"/>
<dbReference type="InParanoid" id="Q9QYW5"/>
<dbReference type="PhylomeDB" id="Q9QYW5"/>
<dbReference type="TreeFam" id="TF330414"/>
<dbReference type="PRO" id="PR:Q9QYW5"/>
<dbReference type="Proteomes" id="UP000002494">
    <property type="component" value="Chromosome 1"/>
</dbReference>
<dbReference type="Bgee" id="ENSRNOG00000021104">
    <property type="expression patterns" value="Expressed in ovary and 19 other cell types or tissues"/>
</dbReference>
<dbReference type="GO" id="GO:0005886">
    <property type="term" value="C:plasma membrane"/>
    <property type="evidence" value="ECO:0000266"/>
    <property type="project" value="RGD"/>
</dbReference>
<dbReference type="GO" id="GO:0006915">
    <property type="term" value="P:apoptotic process"/>
    <property type="evidence" value="ECO:0000266"/>
    <property type="project" value="RGD"/>
</dbReference>
<dbReference type="GO" id="GO:0032060">
    <property type="term" value="P:bleb assembly"/>
    <property type="evidence" value="ECO:0000266"/>
    <property type="project" value="RGD"/>
</dbReference>
<dbReference type="FunFam" id="1.20.140.150:FF:000016">
    <property type="entry name" value="Epithelial membrane protein 3"/>
    <property type="match status" value="1"/>
</dbReference>
<dbReference type="Gene3D" id="1.20.140.150">
    <property type="match status" value="1"/>
</dbReference>
<dbReference type="InterPro" id="IPR003934">
    <property type="entry name" value="EMP_3"/>
</dbReference>
<dbReference type="InterPro" id="IPR050579">
    <property type="entry name" value="PMP-22/EMP/MP20-like"/>
</dbReference>
<dbReference type="InterPro" id="IPR004031">
    <property type="entry name" value="PMP22/EMP/MP20/Claudin"/>
</dbReference>
<dbReference type="InterPro" id="IPR004032">
    <property type="entry name" value="PMP22_EMP_MP20"/>
</dbReference>
<dbReference type="PANTHER" id="PTHR10671:SF8">
    <property type="entry name" value="EPITHELIAL MEMBRANE PROTEIN 3"/>
    <property type="match status" value="1"/>
</dbReference>
<dbReference type="PANTHER" id="PTHR10671">
    <property type="entry name" value="EPITHELIAL MEMBRANE PROTEIN-RELATED"/>
    <property type="match status" value="1"/>
</dbReference>
<dbReference type="Pfam" id="PF00822">
    <property type="entry name" value="PMP22_Claudin"/>
    <property type="match status" value="1"/>
</dbReference>
<dbReference type="PRINTS" id="PR01453">
    <property type="entry name" value="EPMEMFAMILY"/>
</dbReference>
<dbReference type="PRINTS" id="PR01456">
    <property type="entry name" value="EPMEMPROT3"/>
</dbReference>
<dbReference type="PROSITE" id="PS01221">
    <property type="entry name" value="PMP22_1"/>
    <property type="match status" value="1"/>
</dbReference>
<dbReference type="PROSITE" id="PS01222">
    <property type="entry name" value="PMP22_2"/>
    <property type="match status" value="1"/>
</dbReference>
<sequence>MSLLLLVVSALHILILVLLFVATLDKSWWTLPEKESLNLWYDCTWNTTAKTWACSNVSENGWLKAVQALMVLSLILCCLSFILFMIQLYTMRRGGLFYATGLCQLCTSAAVFSGALIYAIHAKEILAKHPSGGSFGYCFALAWVAFPLALVSGIIYIHLRKRE</sequence>
<accession>Q9QYW5</accession>
<reference key="1">
    <citation type="journal article" date="1999" name="Proc. Natl. Acad. Sci. U.S.A.">
        <title>Genetic dissection of dome formation in a mammary cell line: identification of two genes with opposing action.</title>
        <authorList>
            <person name="Zucchi I."/>
            <person name="Montagna C."/>
            <person name="Susani L."/>
            <person name="Montesano R."/>
            <person name="Affer M."/>
            <person name="Zanotti S."/>
            <person name="Redolfi E."/>
            <person name="Vezzoni P."/>
            <person name="Dulbecco R."/>
        </authorList>
    </citation>
    <scope>NUCLEOTIDE SEQUENCE [MRNA]</scope>
    <source>
        <strain>Sprague-Dawley</strain>
    </source>
</reference>
<reference key="2">
    <citation type="journal article" date="2004" name="Genome Res.">
        <title>The status, quality, and expansion of the NIH full-length cDNA project: the Mammalian Gene Collection (MGC).</title>
        <authorList>
            <consortium name="The MGC Project Team"/>
        </authorList>
    </citation>
    <scope>NUCLEOTIDE SEQUENCE [LARGE SCALE MRNA]</scope>
    <source>
        <tissue>Spleen</tissue>
    </source>
</reference>
<proteinExistence type="evidence at transcript level"/>
<protein>
    <recommendedName>
        <fullName>Epithelial membrane protein 3</fullName>
        <shortName>EMP-3</shortName>
    </recommendedName>
</protein>
<evidence type="ECO:0000255" key="1"/>
<evidence type="ECO:0000305" key="2"/>
<keyword id="KW-0325">Glycoprotein</keyword>
<keyword id="KW-0472">Membrane</keyword>
<keyword id="KW-1185">Reference proteome</keyword>
<keyword id="KW-0812">Transmembrane</keyword>
<keyword id="KW-1133">Transmembrane helix</keyword>
<gene>
    <name type="primary">Emp3</name>
</gene>
<name>EMP3_RAT</name>